<feature type="chain" id="PRO_1000216114" description="Probable dual-specificity RNA methyltransferase RlmN">
    <location>
        <begin position="1"/>
        <end position="343"/>
    </location>
</feature>
<feature type="domain" description="Radical SAM core" evidence="2">
    <location>
        <begin position="89"/>
        <end position="323"/>
    </location>
</feature>
<feature type="active site" description="Proton acceptor" evidence="1">
    <location>
        <position position="83"/>
    </location>
</feature>
<feature type="active site" description="S-methylcysteine intermediate" evidence="1">
    <location>
        <position position="328"/>
    </location>
</feature>
<feature type="binding site" evidence="1">
    <location>
        <position position="103"/>
    </location>
    <ligand>
        <name>[4Fe-4S] cluster</name>
        <dbReference type="ChEBI" id="CHEBI:49883"/>
        <note>4Fe-4S-S-AdoMet</note>
    </ligand>
</feature>
<feature type="binding site" evidence="1">
    <location>
        <position position="107"/>
    </location>
    <ligand>
        <name>[4Fe-4S] cluster</name>
        <dbReference type="ChEBI" id="CHEBI:49883"/>
        <note>4Fe-4S-S-AdoMet</note>
    </ligand>
</feature>
<feature type="binding site" evidence="1">
    <location>
        <position position="110"/>
    </location>
    <ligand>
        <name>[4Fe-4S] cluster</name>
        <dbReference type="ChEBI" id="CHEBI:49883"/>
        <note>4Fe-4S-S-AdoMet</note>
    </ligand>
</feature>
<feature type="binding site" evidence="1">
    <location>
        <begin position="153"/>
        <end position="154"/>
    </location>
    <ligand>
        <name>S-adenosyl-L-methionine</name>
        <dbReference type="ChEBI" id="CHEBI:59789"/>
    </ligand>
</feature>
<feature type="binding site" evidence="1">
    <location>
        <position position="185"/>
    </location>
    <ligand>
        <name>S-adenosyl-L-methionine</name>
        <dbReference type="ChEBI" id="CHEBI:59789"/>
    </ligand>
</feature>
<feature type="binding site" evidence="1">
    <location>
        <begin position="209"/>
        <end position="211"/>
    </location>
    <ligand>
        <name>S-adenosyl-L-methionine</name>
        <dbReference type="ChEBI" id="CHEBI:59789"/>
    </ligand>
</feature>
<feature type="binding site" evidence="1">
    <location>
        <position position="285"/>
    </location>
    <ligand>
        <name>S-adenosyl-L-methionine</name>
        <dbReference type="ChEBI" id="CHEBI:59789"/>
    </ligand>
</feature>
<feature type="disulfide bond" description="(transient)" evidence="1">
    <location>
        <begin position="96"/>
        <end position="328"/>
    </location>
</feature>
<comment type="function">
    <text evidence="1">Specifically methylates position 2 of adenine 2503 in 23S rRNA and position 2 of adenine 37 in tRNAs.</text>
</comment>
<comment type="catalytic activity">
    <reaction evidence="1">
        <text>adenosine(2503) in 23S rRNA + 2 reduced [2Fe-2S]-[ferredoxin] + 2 S-adenosyl-L-methionine = 2-methyladenosine(2503) in 23S rRNA + 5'-deoxyadenosine + L-methionine + 2 oxidized [2Fe-2S]-[ferredoxin] + S-adenosyl-L-homocysteine</text>
        <dbReference type="Rhea" id="RHEA:42916"/>
        <dbReference type="Rhea" id="RHEA-COMP:10000"/>
        <dbReference type="Rhea" id="RHEA-COMP:10001"/>
        <dbReference type="Rhea" id="RHEA-COMP:10152"/>
        <dbReference type="Rhea" id="RHEA-COMP:10282"/>
        <dbReference type="ChEBI" id="CHEBI:17319"/>
        <dbReference type="ChEBI" id="CHEBI:33737"/>
        <dbReference type="ChEBI" id="CHEBI:33738"/>
        <dbReference type="ChEBI" id="CHEBI:57844"/>
        <dbReference type="ChEBI" id="CHEBI:57856"/>
        <dbReference type="ChEBI" id="CHEBI:59789"/>
        <dbReference type="ChEBI" id="CHEBI:74411"/>
        <dbReference type="ChEBI" id="CHEBI:74497"/>
        <dbReference type="EC" id="2.1.1.192"/>
    </reaction>
</comment>
<comment type="catalytic activity">
    <reaction evidence="1">
        <text>adenosine(37) in tRNA + 2 reduced [2Fe-2S]-[ferredoxin] + 2 S-adenosyl-L-methionine = 2-methyladenosine(37) in tRNA + 5'-deoxyadenosine + L-methionine + 2 oxidized [2Fe-2S]-[ferredoxin] + S-adenosyl-L-homocysteine</text>
        <dbReference type="Rhea" id="RHEA:43332"/>
        <dbReference type="Rhea" id="RHEA-COMP:10000"/>
        <dbReference type="Rhea" id="RHEA-COMP:10001"/>
        <dbReference type="Rhea" id="RHEA-COMP:10162"/>
        <dbReference type="Rhea" id="RHEA-COMP:10485"/>
        <dbReference type="ChEBI" id="CHEBI:17319"/>
        <dbReference type="ChEBI" id="CHEBI:33737"/>
        <dbReference type="ChEBI" id="CHEBI:33738"/>
        <dbReference type="ChEBI" id="CHEBI:57844"/>
        <dbReference type="ChEBI" id="CHEBI:57856"/>
        <dbReference type="ChEBI" id="CHEBI:59789"/>
        <dbReference type="ChEBI" id="CHEBI:74411"/>
        <dbReference type="ChEBI" id="CHEBI:74497"/>
        <dbReference type="EC" id="2.1.1.192"/>
    </reaction>
</comment>
<comment type="cofactor">
    <cofactor evidence="1">
        <name>[4Fe-4S] cluster</name>
        <dbReference type="ChEBI" id="CHEBI:49883"/>
    </cofactor>
    <text evidence="1">Binds 1 [4Fe-4S] cluster. The cluster is coordinated with 3 cysteines and an exchangeable S-adenosyl-L-methionine.</text>
</comment>
<comment type="subcellular location">
    <subcellularLocation>
        <location evidence="1">Cytoplasm</location>
    </subcellularLocation>
</comment>
<comment type="miscellaneous">
    <text evidence="1">Reaction proceeds by a ping-pong mechanism involving intermediate methylation of a conserved cysteine residue.</text>
</comment>
<comment type="similarity">
    <text evidence="1">Belongs to the radical SAM superfamily. RlmN family.</text>
</comment>
<keyword id="KW-0004">4Fe-4S</keyword>
<keyword id="KW-0963">Cytoplasm</keyword>
<keyword id="KW-1015">Disulfide bond</keyword>
<keyword id="KW-0408">Iron</keyword>
<keyword id="KW-0411">Iron-sulfur</keyword>
<keyword id="KW-0479">Metal-binding</keyword>
<keyword id="KW-0489">Methyltransferase</keyword>
<keyword id="KW-1185">Reference proteome</keyword>
<keyword id="KW-0698">rRNA processing</keyword>
<keyword id="KW-0949">S-adenosyl-L-methionine</keyword>
<keyword id="KW-0808">Transferase</keyword>
<keyword id="KW-0819">tRNA processing</keyword>
<sequence length="343" mass="37418">MEFLLDLHPDAYPLEGFRRRQLLEWVFVQGVGTFDAMTNLPAEARAELARSYHLNPFREIETVRSADGSVKYLFTLTDGRQMEAVYMPYLDRKTICVSTMVGCPARCAFCATGAMGFGRNLTPGEIVAQVLAVAGGEGIGPREIRNLVFMGMGEAMLNYENTMQAARILLHPQALGMSKRRVTLSTVGIAKGIRQLAAEDDLGIKLAISLHAPDEDTRQRIIPTGAANSIAEIMAAARDYQAVTGRRITLEYTMLRGINDHLWQAELLADVLQGLVSHVNLIPMNPWDGSGFESSTEDQIQAFYDTLEARGVDVSVRRSRGKDAGAACGQLALKRPGAVTGAA</sequence>
<protein>
    <recommendedName>
        <fullName evidence="1">Probable dual-specificity RNA methyltransferase RlmN</fullName>
        <ecNumber evidence="1">2.1.1.192</ecNumber>
    </recommendedName>
    <alternativeName>
        <fullName evidence="1">23S rRNA (adenine(2503)-C(2))-methyltransferase</fullName>
    </alternativeName>
    <alternativeName>
        <fullName evidence="1">23S rRNA m2A2503 methyltransferase</fullName>
    </alternativeName>
    <alternativeName>
        <fullName evidence="1">Ribosomal RNA large subunit methyltransferase N</fullName>
    </alternativeName>
    <alternativeName>
        <fullName evidence="1">tRNA (adenine(37)-C(2))-methyltransferase</fullName>
    </alternativeName>
    <alternativeName>
        <fullName evidence="1">tRNA m2A37 methyltransferase</fullName>
    </alternativeName>
</protein>
<accession>C1CVX7</accession>
<name>RLMN_DEIDV</name>
<gene>
    <name evidence="1" type="primary">rlmN</name>
    <name type="ordered locus">Deide_14010</name>
</gene>
<dbReference type="EC" id="2.1.1.192" evidence="1"/>
<dbReference type="EMBL" id="CP001114">
    <property type="protein sequence ID" value="ACO46344.1"/>
    <property type="molecule type" value="Genomic_DNA"/>
</dbReference>
<dbReference type="RefSeq" id="WP_012693467.1">
    <property type="nucleotide sequence ID" value="NC_012526.1"/>
</dbReference>
<dbReference type="SMR" id="C1CVX7"/>
<dbReference type="STRING" id="546414.Deide_14010"/>
<dbReference type="PaxDb" id="546414-Deide_14010"/>
<dbReference type="KEGG" id="ddr:Deide_14010"/>
<dbReference type="eggNOG" id="COG0820">
    <property type="taxonomic scope" value="Bacteria"/>
</dbReference>
<dbReference type="HOGENOM" id="CLU_029101_0_2_0"/>
<dbReference type="OrthoDB" id="9793973at2"/>
<dbReference type="Proteomes" id="UP000002208">
    <property type="component" value="Chromosome"/>
</dbReference>
<dbReference type="GO" id="GO:0005737">
    <property type="term" value="C:cytoplasm"/>
    <property type="evidence" value="ECO:0007669"/>
    <property type="project" value="UniProtKB-SubCell"/>
</dbReference>
<dbReference type="GO" id="GO:0051539">
    <property type="term" value="F:4 iron, 4 sulfur cluster binding"/>
    <property type="evidence" value="ECO:0007669"/>
    <property type="project" value="UniProtKB-UniRule"/>
</dbReference>
<dbReference type="GO" id="GO:0046872">
    <property type="term" value="F:metal ion binding"/>
    <property type="evidence" value="ECO:0007669"/>
    <property type="project" value="UniProtKB-KW"/>
</dbReference>
<dbReference type="GO" id="GO:0070040">
    <property type="term" value="F:rRNA (adenine(2503)-C2-)-methyltransferase activity"/>
    <property type="evidence" value="ECO:0007669"/>
    <property type="project" value="UniProtKB-UniRule"/>
</dbReference>
<dbReference type="GO" id="GO:0019843">
    <property type="term" value="F:rRNA binding"/>
    <property type="evidence" value="ECO:0007669"/>
    <property type="project" value="UniProtKB-UniRule"/>
</dbReference>
<dbReference type="GO" id="GO:0002935">
    <property type="term" value="F:tRNA (adenine(37)-C2)-methyltransferase activity"/>
    <property type="evidence" value="ECO:0007669"/>
    <property type="project" value="UniProtKB-UniRule"/>
</dbReference>
<dbReference type="GO" id="GO:0000049">
    <property type="term" value="F:tRNA binding"/>
    <property type="evidence" value="ECO:0007669"/>
    <property type="project" value="UniProtKB-UniRule"/>
</dbReference>
<dbReference type="GO" id="GO:0070475">
    <property type="term" value="P:rRNA base methylation"/>
    <property type="evidence" value="ECO:0007669"/>
    <property type="project" value="UniProtKB-UniRule"/>
</dbReference>
<dbReference type="GO" id="GO:0030488">
    <property type="term" value="P:tRNA methylation"/>
    <property type="evidence" value="ECO:0007669"/>
    <property type="project" value="UniProtKB-UniRule"/>
</dbReference>
<dbReference type="CDD" id="cd01335">
    <property type="entry name" value="Radical_SAM"/>
    <property type="match status" value="1"/>
</dbReference>
<dbReference type="FunFam" id="3.20.20.70:FF:000014">
    <property type="entry name" value="Probable dual-specificity RNA methyltransferase RlmN"/>
    <property type="match status" value="1"/>
</dbReference>
<dbReference type="Gene3D" id="1.10.150.530">
    <property type="match status" value="1"/>
</dbReference>
<dbReference type="Gene3D" id="3.20.20.70">
    <property type="entry name" value="Aldolase class I"/>
    <property type="match status" value="1"/>
</dbReference>
<dbReference type="HAMAP" id="MF_01849">
    <property type="entry name" value="RNA_methyltr_RlmN"/>
    <property type="match status" value="1"/>
</dbReference>
<dbReference type="InterPro" id="IPR013785">
    <property type="entry name" value="Aldolase_TIM"/>
</dbReference>
<dbReference type="InterPro" id="IPR040072">
    <property type="entry name" value="Methyltransferase_A"/>
</dbReference>
<dbReference type="InterPro" id="IPR048641">
    <property type="entry name" value="RlmN_N"/>
</dbReference>
<dbReference type="InterPro" id="IPR027492">
    <property type="entry name" value="RNA_MTrfase_RlmN"/>
</dbReference>
<dbReference type="InterPro" id="IPR004383">
    <property type="entry name" value="rRNA_lsu_MTrfase_RlmN/Cfr"/>
</dbReference>
<dbReference type="InterPro" id="IPR007197">
    <property type="entry name" value="rSAM"/>
</dbReference>
<dbReference type="NCBIfam" id="TIGR00048">
    <property type="entry name" value="rRNA_mod_RlmN"/>
    <property type="match status" value="1"/>
</dbReference>
<dbReference type="PANTHER" id="PTHR30544">
    <property type="entry name" value="23S RRNA METHYLTRANSFERASE"/>
    <property type="match status" value="1"/>
</dbReference>
<dbReference type="PANTHER" id="PTHR30544:SF5">
    <property type="entry name" value="RADICAL SAM CORE DOMAIN-CONTAINING PROTEIN"/>
    <property type="match status" value="1"/>
</dbReference>
<dbReference type="Pfam" id="PF04055">
    <property type="entry name" value="Radical_SAM"/>
    <property type="match status" value="1"/>
</dbReference>
<dbReference type="Pfam" id="PF21016">
    <property type="entry name" value="RlmN_N"/>
    <property type="match status" value="1"/>
</dbReference>
<dbReference type="PIRSF" id="PIRSF006004">
    <property type="entry name" value="CHP00048"/>
    <property type="match status" value="1"/>
</dbReference>
<dbReference type="SFLD" id="SFLDF00275">
    <property type="entry name" value="adenosine_C2_methyltransferase"/>
    <property type="match status" value="1"/>
</dbReference>
<dbReference type="SFLD" id="SFLDG01062">
    <property type="entry name" value="methyltransferase_(Class_A)"/>
    <property type="match status" value="1"/>
</dbReference>
<dbReference type="SUPFAM" id="SSF102114">
    <property type="entry name" value="Radical SAM enzymes"/>
    <property type="match status" value="1"/>
</dbReference>
<dbReference type="PROSITE" id="PS51918">
    <property type="entry name" value="RADICAL_SAM"/>
    <property type="match status" value="1"/>
</dbReference>
<organism>
    <name type="scientific">Deinococcus deserti (strain DSM 17065 / CIP 109153 / LMG 22923 / VCD115)</name>
    <dbReference type="NCBI Taxonomy" id="546414"/>
    <lineage>
        <taxon>Bacteria</taxon>
        <taxon>Thermotogati</taxon>
        <taxon>Deinococcota</taxon>
        <taxon>Deinococci</taxon>
        <taxon>Deinococcales</taxon>
        <taxon>Deinococcaceae</taxon>
        <taxon>Deinococcus</taxon>
    </lineage>
</organism>
<proteinExistence type="inferred from homology"/>
<reference key="1">
    <citation type="journal article" date="2009" name="PLoS Genet.">
        <title>Alliance of proteomics and genomics to unravel the specificities of Sahara bacterium Deinococcus deserti.</title>
        <authorList>
            <person name="de Groot A."/>
            <person name="Dulermo R."/>
            <person name="Ortet P."/>
            <person name="Blanchard L."/>
            <person name="Guerin P."/>
            <person name="Fernandez B."/>
            <person name="Vacherie B."/>
            <person name="Dossat C."/>
            <person name="Jolivet E."/>
            <person name="Siguier P."/>
            <person name="Chandler M."/>
            <person name="Barakat M."/>
            <person name="Dedieu A."/>
            <person name="Barbe V."/>
            <person name="Heulin T."/>
            <person name="Sommer S."/>
            <person name="Achouak W."/>
            <person name="Armengaud J."/>
        </authorList>
    </citation>
    <scope>NUCLEOTIDE SEQUENCE [LARGE SCALE GENOMIC DNA]</scope>
    <source>
        <strain>DSM 17065 / CIP 109153 / LMG 22923 / VCD115</strain>
    </source>
</reference>
<evidence type="ECO:0000255" key="1">
    <source>
        <dbReference type="HAMAP-Rule" id="MF_01849"/>
    </source>
</evidence>
<evidence type="ECO:0000255" key="2">
    <source>
        <dbReference type="PROSITE-ProRule" id="PRU01266"/>
    </source>
</evidence>